<comment type="function">
    <text evidence="1">Catalyzes two activities which are involved in the cyclic version of arginine biosynthesis: the synthesis of acetylglutamate from glutamate and acetyl-CoA, and of ornithine by transacetylation between acetylornithine and glutamate.</text>
</comment>
<comment type="catalytic activity">
    <reaction evidence="1">
        <text>N(2)-acetyl-L-ornithine + L-glutamate = N-acetyl-L-glutamate + L-ornithine</text>
        <dbReference type="Rhea" id="RHEA:15349"/>
        <dbReference type="ChEBI" id="CHEBI:29985"/>
        <dbReference type="ChEBI" id="CHEBI:44337"/>
        <dbReference type="ChEBI" id="CHEBI:46911"/>
        <dbReference type="ChEBI" id="CHEBI:57805"/>
        <dbReference type="EC" id="2.3.1.35"/>
    </reaction>
</comment>
<comment type="catalytic activity">
    <reaction evidence="1">
        <text>L-glutamate + acetyl-CoA = N-acetyl-L-glutamate + CoA + H(+)</text>
        <dbReference type="Rhea" id="RHEA:24292"/>
        <dbReference type="ChEBI" id="CHEBI:15378"/>
        <dbReference type="ChEBI" id="CHEBI:29985"/>
        <dbReference type="ChEBI" id="CHEBI:44337"/>
        <dbReference type="ChEBI" id="CHEBI:57287"/>
        <dbReference type="ChEBI" id="CHEBI:57288"/>
        <dbReference type="EC" id="2.3.1.1"/>
    </reaction>
</comment>
<comment type="pathway">
    <text evidence="1">Amino-acid biosynthesis; L-arginine biosynthesis; L-ornithine and N-acetyl-L-glutamate from L-glutamate and N(2)-acetyl-L-ornithine (cyclic): step 1/1.</text>
</comment>
<comment type="pathway">
    <text evidence="1">Amino-acid biosynthesis; L-arginine biosynthesis; N(2)-acetyl-L-ornithine from L-glutamate: step 1/4.</text>
</comment>
<comment type="subunit">
    <text evidence="1">Heterodimer of an alpha and a beta chain.</text>
</comment>
<comment type="subcellular location">
    <subcellularLocation>
        <location evidence="1">Mitochondrion matrix</location>
    </subcellularLocation>
</comment>
<comment type="PTM">
    <text evidence="1">The alpha and beta chains are autoproteolytically processed from a single precursor protein within the mitochondrion.</text>
</comment>
<comment type="miscellaneous">
    <text evidence="1">This protein may be expected to contain an N-terminal transit peptide but none has been predicted.</text>
</comment>
<comment type="similarity">
    <text evidence="1">Belongs to the ArgJ family.</text>
</comment>
<proteinExistence type="inferred from homology"/>
<sequence>MARVMTAQIRQYTTPIDTSVPDSKRKYIPSSGTYPRGFRVSGTHVGVKPSNTTFPDLALISSDEPCSAAAVFTTNRFQAAPVQVSKQILEAREGRGIRGVVVNAGCANAVTGKGGLEDAKSMSAKVDECNGLNSTGGQGDSSTLVMSTGVIGQRLPIQKILSGIPTGYSNLSSTHAAWLKTARAICTTDTFPKLVSQTFTLPSSPDRTYHIAGMTKGAGMIHPNMATLLGIICTDAPIAPSALQSLLTHAVSRSFNSISIDGDTSTNDTVALLANGAAGGQPISSPTSPEYTAMQSILTGFAQSLAQLVVRDGEGATKFVTVRVQNSPSHSDAKLIASTIARSPLVKTALYGKDANWGRILCAAGYTQGLSPGTLVPERTSVSFKPVDGSAELKLVVNGEPEVVDEERAAAILQDEDLEIVVDLGGGNQGEAAKGGEDALYWFCDFSHEYVTINGDYRT</sequence>
<evidence type="ECO:0000255" key="1">
    <source>
        <dbReference type="HAMAP-Rule" id="MF_03124"/>
    </source>
</evidence>
<keyword id="KW-0012">Acyltransferase</keyword>
<keyword id="KW-0028">Amino-acid biosynthesis</keyword>
<keyword id="KW-0055">Arginine biosynthesis</keyword>
<keyword id="KW-0068">Autocatalytic cleavage</keyword>
<keyword id="KW-0496">Mitochondrion</keyword>
<keyword id="KW-0511">Multifunctional enzyme</keyword>
<keyword id="KW-1185">Reference proteome</keyword>
<keyword id="KW-0808">Transferase</keyword>
<organism>
    <name type="scientific">Uncinocarpus reesii (strain UAMH 1704)</name>
    <dbReference type="NCBI Taxonomy" id="336963"/>
    <lineage>
        <taxon>Eukaryota</taxon>
        <taxon>Fungi</taxon>
        <taxon>Dikarya</taxon>
        <taxon>Ascomycota</taxon>
        <taxon>Pezizomycotina</taxon>
        <taxon>Eurotiomycetes</taxon>
        <taxon>Eurotiomycetidae</taxon>
        <taxon>Onygenales</taxon>
        <taxon>Onygenaceae</taxon>
        <taxon>Uncinocarpus</taxon>
    </lineage>
</organism>
<feature type="chain" id="PRO_0000398116" description="Arginine biosynthesis bifunctional protein ArgJ alpha chain" evidence="1">
    <location>
        <begin position="1"/>
        <end position="226"/>
    </location>
</feature>
<feature type="chain" id="PRO_0000398117" description="Arginine biosynthesis bifunctional protein ArgJ beta chain" evidence="1">
    <location>
        <begin position="227"/>
        <end position="459"/>
    </location>
</feature>
<feature type="active site" description="Nucleophile" evidence="1">
    <location>
        <position position="227"/>
    </location>
</feature>
<feature type="binding site" evidence="1">
    <location>
        <position position="187"/>
    </location>
    <ligand>
        <name>substrate</name>
    </ligand>
</feature>
<feature type="binding site" evidence="1">
    <location>
        <position position="216"/>
    </location>
    <ligand>
        <name>substrate</name>
    </ligand>
</feature>
<feature type="binding site" evidence="1">
    <location>
        <position position="227"/>
    </location>
    <ligand>
        <name>substrate</name>
    </ligand>
</feature>
<feature type="binding site" evidence="1">
    <location>
        <position position="314"/>
    </location>
    <ligand>
        <name>substrate</name>
    </ligand>
</feature>
<feature type="binding site" evidence="1">
    <location>
        <position position="454"/>
    </location>
    <ligand>
        <name>substrate</name>
    </ligand>
</feature>
<feature type="binding site" evidence="1">
    <location>
        <position position="459"/>
    </location>
    <ligand>
        <name>substrate</name>
    </ligand>
</feature>
<feature type="site" description="Involved in the stabilization of negative charge on the oxyanion by the formation of the oxyanion hole" evidence="1">
    <location>
        <position position="148"/>
    </location>
</feature>
<feature type="site" description="Involved in the stabilization of negative charge on the oxyanion by the formation of the oxyanion hole" evidence="1">
    <location>
        <position position="149"/>
    </location>
</feature>
<feature type="site" description="Cleavage; by autolysis" evidence="1">
    <location>
        <begin position="226"/>
        <end position="227"/>
    </location>
</feature>
<accession>C4JMY4</accession>
<name>ARGJ_UNCRE</name>
<gene>
    <name type="ORF">UREG_04192</name>
</gene>
<dbReference type="EC" id="2.3.1.35" evidence="1"/>
<dbReference type="EC" id="2.3.1.1" evidence="1"/>
<dbReference type="EMBL" id="CH476616">
    <property type="protein sequence ID" value="EEP79346.1"/>
    <property type="molecule type" value="Genomic_DNA"/>
</dbReference>
<dbReference type="RefSeq" id="XP_002544675.1">
    <property type="nucleotide sequence ID" value="XM_002544629.1"/>
</dbReference>
<dbReference type="SMR" id="C4JMY4"/>
<dbReference type="FunCoup" id="C4JMY4">
    <property type="interactions" value="258"/>
</dbReference>
<dbReference type="STRING" id="336963.C4JMY4"/>
<dbReference type="MEROPS" id="T05.001"/>
<dbReference type="GeneID" id="8437205"/>
<dbReference type="KEGG" id="ure:UREG_04192"/>
<dbReference type="VEuPathDB" id="FungiDB:UREG_04192"/>
<dbReference type="eggNOG" id="KOG2786">
    <property type="taxonomic scope" value="Eukaryota"/>
</dbReference>
<dbReference type="HOGENOM" id="CLU_027172_1_0_1"/>
<dbReference type="InParanoid" id="C4JMY4"/>
<dbReference type="OMA" id="WGRIVMA"/>
<dbReference type="OrthoDB" id="2017946at2759"/>
<dbReference type="UniPathway" id="UPA00068">
    <property type="reaction ID" value="UER00106"/>
</dbReference>
<dbReference type="UniPathway" id="UPA00068">
    <property type="reaction ID" value="UER00111"/>
</dbReference>
<dbReference type="Proteomes" id="UP000002058">
    <property type="component" value="Unassembled WGS sequence"/>
</dbReference>
<dbReference type="GO" id="GO:0005759">
    <property type="term" value="C:mitochondrial matrix"/>
    <property type="evidence" value="ECO:0007669"/>
    <property type="project" value="UniProtKB-SubCell"/>
</dbReference>
<dbReference type="GO" id="GO:0004358">
    <property type="term" value="F:glutamate N-acetyltransferase activity"/>
    <property type="evidence" value="ECO:0007669"/>
    <property type="project" value="UniProtKB-UniRule"/>
</dbReference>
<dbReference type="GO" id="GO:0004042">
    <property type="term" value="F:L-glutamate N-acetyltransferase activity"/>
    <property type="evidence" value="ECO:0007669"/>
    <property type="project" value="UniProtKB-UniRule"/>
</dbReference>
<dbReference type="GO" id="GO:0006526">
    <property type="term" value="P:L-arginine biosynthetic process"/>
    <property type="evidence" value="ECO:0007669"/>
    <property type="project" value="UniProtKB-UniRule"/>
</dbReference>
<dbReference type="GO" id="GO:0006592">
    <property type="term" value="P:ornithine biosynthetic process"/>
    <property type="evidence" value="ECO:0007669"/>
    <property type="project" value="EnsemblFungi"/>
</dbReference>
<dbReference type="CDD" id="cd02152">
    <property type="entry name" value="OAT"/>
    <property type="match status" value="1"/>
</dbReference>
<dbReference type="FunFam" id="3.60.70.12:FF:000001">
    <property type="entry name" value="Arginine biosynthesis bifunctional protein ArgJ, chloroplastic"/>
    <property type="match status" value="1"/>
</dbReference>
<dbReference type="FunFam" id="3.10.20.340:FF:000002">
    <property type="entry name" value="Arginine biosynthesis bifunctional protein ArgJ, mitochondrial"/>
    <property type="match status" value="1"/>
</dbReference>
<dbReference type="FunFam" id="3.30.2330.10:FF:000001">
    <property type="entry name" value="Arginine biosynthesis bifunctional protein ArgJ, mitochondrial"/>
    <property type="match status" value="1"/>
</dbReference>
<dbReference type="Gene3D" id="3.30.2330.10">
    <property type="entry name" value="arginine biosynthesis bifunctional protein suprefamily"/>
    <property type="match status" value="1"/>
</dbReference>
<dbReference type="Gene3D" id="3.10.20.340">
    <property type="entry name" value="ArgJ beta chain, C-terminal domain"/>
    <property type="match status" value="1"/>
</dbReference>
<dbReference type="Gene3D" id="3.60.70.12">
    <property type="entry name" value="L-amino peptidase D-ALA esterase/amidase"/>
    <property type="match status" value="1"/>
</dbReference>
<dbReference type="HAMAP" id="MF_01106">
    <property type="entry name" value="ArgJ"/>
    <property type="match status" value="1"/>
</dbReference>
<dbReference type="InterPro" id="IPR002813">
    <property type="entry name" value="Arg_biosynth_ArgJ"/>
</dbReference>
<dbReference type="InterPro" id="IPR016117">
    <property type="entry name" value="ArgJ-like_dom_sf"/>
</dbReference>
<dbReference type="InterPro" id="IPR042195">
    <property type="entry name" value="ArgJ_beta_C"/>
</dbReference>
<dbReference type="NCBIfam" id="TIGR00120">
    <property type="entry name" value="ArgJ"/>
    <property type="match status" value="1"/>
</dbReference>
<dbReference type="NCBIfam" id="NF003802">
    <property type="entry name" value="PRK05388.1"/>
    <property type="match status" value="1"/>
</dbReference>
<dbReference type="PANTHER" id="PTHR23100">
    <property type="entry name" value="ARGININE BIOSYNTHESIS BIFUNCTIONAL PROTEIN ARGJ"/>
    <property type="match status" value="1"/>
</dbReference>
<dbReference type="PANTHER" id="PTHR23100:SF0">
    <property type="entry name" value="ARGININE BIOSYNTHESIS BIFUNCTIONAL PROTEIN ARGJ, MITOCHONDRIAL"/>
    <property type="match status" value="1"/>
</dbReference>
<dbReference type="Pfam" id="PF01960">
    <property type="entry name" value="ArgJ"/>
    <property type="match status" value="1"/>
</dbReference>
<dbReference type="SUPFAM" id="SSF56266">
    <property type="entry name" value="DmpA/ArgJ-like"/>
    <property type="match status" value="1"/>
</dbReference>
<protein>
    <recommendedName>
        <fullName evidence="1">Arginine biosynthesis bifunctional protein ArgJ, mitochondrial</fullName>
    </recommendedName>
    <domain>
        <recommendedName>
            <fullName evidence="1">Glutamate N-acetyltransferase</fullName>
            <shortName evidence="1">GAT</shortName>
            <ecNumber evidence="1">2.3.1.35</ecNumber>
        </recommendedName>
        <alternativeName>
            <fullName evidence="1">Ornithine acetyltransferase</fullName>
            <shortName evidence="1">OATase</shortName>
        </alternativeName>
        <alternativeName>
            <fullName evidence="1">Ornithine transacetylase</fullName>
        </alternativeName>
    </domain>
    <domain>
        <recommendedName>
            <fullName evidence="1">Amino-acid acetyltransferase</fullName>
            <ecNumber evidence="1">2.3.1.1</ecNumber>
        </recommendedName>
        <alternativeName>
            <fullName evidence="1">N-acetylglutamate synthase</fullName>
            <shortName evidence="1">AGS</shortName>
        </alternativeName>
    </domain>
    <component>
        <recommendedName>
            <fullName evidence="1">Arginine biosynthesis bifunctional protein ArgJ alpha chain</fullName>
        </recommendedName>
    </component>
    <component>
        <recommendedName>
            <fullName evidence="1">Arginine biosynthesis bifunctional protein ArgJ beta chain</fullName>
        </recommendedName>
    </component>
</protein>
<reference key="1">
    <citation type="journal article" date="2009" name="Genome Res.">
        <title>Comparative genomic analyses of the human fungal pathogens Coccidioides and their relatives.</title>
        <authorList>
            <person name="Sharpton T.J."/>
            <person name="Stajich J.E."/>
            <person name="Rounsley S.D."/>
            <person name="Gardner M.J."/>
            <person name="Wortman J.R."/>
            <person name="Jordar V.S."/>
            <person name="Maiti R."/>
            <person name="Kodira C.D."/>
            <person name="Neafsey D.E."/>
            <person name="Zeng Q."/>
            <person name="Hung C.-Y."/>
            <person name="McMahan C."/>
            <person name="Muszewska A."/>
            <person name="Grynberg M."/>
            <person name="Mandel M.A."/>
            <person name="Kellner E.M."/>
            <person name="Barker B.M."/>
            <person name="Galgiani J.N."/>
            <person name="Orbach M.J."/>
            <person name="Kirkland T.N."/>
            <person name="Cole G.T."/>
            <person name="Henn M.R."/>
            <person name="Birren B.W."/>
            <person name="Taylor J.W."/>
        </authorList>
    </citation>
    <scope>NUCLEOTIDE SEQUENCE [LARGE SCALE GENOMIC DNA]</scope>
    <source>
        <strain>UAMH 1704</strain>
    </source>
</reference>